<name>VAPA_HUMAN</name>
<dbReference type="EMBL" id="AF044670">
    <property type="protein sequence ID" value="AAD09742.1"/>
    <property type="status" value="ALT_INIT"/>
    <property type="molecule type" value="mRNA"/>
</dbReference>
<dbReference type="EMBL" id="AF154847">
    <property type="protein sequence ID" value="AAF72105.1"/>
    <property type="status" value="ALT_INIT"/>
    <property type="molecule type" value="mRNA"/>
</dbReference>
<dbReference type="EMBL" id="AC006238">
    <property type="status" value="NOT_ANNOTATED_CDS"/>
    <property type="molecule type" value="Genomic_DNA"/>
</dbReference>
<dbReference type="EMBL" id="CH471113">
    <property type="protein sequence ID" value="EAX01591.1"/>
    <property type="molecule type" value="Genomic_DNA"/>
</dbReference>
<dbReference type="EMBL" id="CH471113">
    <property type="protein sequence ID" value="EAX01592.1"/>
    <property type="molecule type" value="Genomic_DNA"/>
</dbReference>
<dbReference type="EMBL" id="BC002992">
    <property type="protein sequence ID" value="AAH02992.2"/>
    <property type="molecule type" value="mRNA"/>
</dbReference>
<dbReference type="EMBL" id="BG488667">
    <property type="status" value="NOT_ANNOTATED_CDS"/>
    <property type="molecule type" value="mRNA"/>
</dbReference>
<dbReference type="EMBL" id="AF057358">
    <property type="protein sequence ID" value="AAC26508.1"/>
    <property type="molecule type" value="mRNA"/>
</dbReference>
<dbReference type="EMBL" id="AF086627">
    <property type="protein sequence ID" value="AAD13576.1"/>
    <property type="molecule type" value="mRNA"/>
</dbReference>
<dbReference type="EMBL" id="BT019618">
    <property type="protein sequence ID" value="AAV38424.1"/>
    <property type="molecule type" value="mRNA"/>
</dbReference>
<dbReference type="CCDS" id="CCDS11847.2">
    <molecule id="Q9P0L0-2"/>
</dbReference>
<dbReference type="CCDS" id="CCDS11848.2">
    <molecule id="Q9P0L0-1"/>
</dbReference>
<dbReference type="RefSeq" id="NP_003565.4">
    <molecule id="Q9P0L0-2"/>
    <property type="nucleotide sequence ID" value="NM_003574.5"/>
</dbReference>
<dbReference type="RefSeq" id="NP_919415.2">
    <molecule id="Q9P0L0-1"/>
    <property type="nucleotide sequence ID" value="NM_194434.3"/>
</dbReference>
<dbReference type="PDB" id="2RR3">
    <property type="method" value="NMR"/>
    <property type="chains" value="A=11-135"/>
</dbReference>
<dbReference type="PDB" id="6TQR">
    <property type="method" value="X-ray"/>
    <property type="resolution" value="1.85 A"/>
    <property type="chains" value="A/B/C/D=8-212"/>
</dbReference>
<dbReference type="PDBsum" id="2RR3"/>
<dbReference type="PDBsum" id="6TQR"/>
<dbReference type="EMDB" id="EMD-11399"/>
<dbReference type="SMR" id="Q9P0L0"/>
<dbReference type="BioGRID" id="114651">
    <property type="interactions" value="703"/>
</dbReference>
<dbReference type="ComplexPortal" id="CPX-489">
    <property type="entry name" value="VAPA-OSBP complex"/>
</dbReference>
<dbReference type="CORUM" id="Q9P0L0"/>
<dbReference type="DIP" id="DIP-41135N"/>
<dbReference type="FunCoup" id="Q9P0L0">
    <property type="interactions" value="3273"/>
</dbReference>
<dbReference type="IntAct" id="Q9P0L0">
    <property type="interactions" value="438"/>
</dbReference>
<dbReference type="MINT" id="Q9P0L0"/>
<dbReference type="STRING" id="9606.ENSP00000345656"/>
<dbReference type="TCDB" id="1.R.1.1.1">
    <property type="family name" value="the membrane contact site (mcs) family"/>
</dbReference>
<dbReference type="GlyCosmos" id="Q9P0L0">
    <property type="glycosylation" value="3 sites, 1 glycan"/>
</dbReference>
<dbReference type="GlyGen" id="Q9P0L0">
    <property type="glycosylation" value="4 sites, 1 N-linked glycan (1 site), 1 O-linked glycan (3 sites)"/>
</dbReference>
<dbReference type="iPTMnet" id="Q9P0L0"/>
<dbReference type="MetOSite" id="Q9P0L0"/>
<dbReference type="PhosphoSitePlus" id="Q9P0L0"/>
<dbReference type="SwissPalm" id="Q9P0L0"/>
<dbReference type="BioMuta" id="VAPA"/>
<dbReference type="DMDM" id="122066680"/>
<dbReference type="jPOST" id="Q9P0L0"/>
<dbReference type="MassIVE" id="Q9P0L0"/>
<dbReference type="PeptideAtlas" id="Q9P0L0"/>
<dbReference type="ProteomicsDB" id="83567">
    <molecule id="Q9P0L0-1"/>
</dbReference>
<dbReference type="ProteomicsDB" id="83568">
    <molecule id="Q9P0L0-2"/>
</dbReference>
<dbReference type="Pumba" id="Q9P0L0"/>
<dbReference type="TopDownProteomics" id="Q9P0L0-1">
    <molecule id="Q9P0L0-1"/>
</dbReference>
<dbReference type="TopDownProteomics" id="Q9P0L0-2">
    <molecule id="Q9P0L0-2"/>
</dbReference>
<dbReference type="Antibodypedia" id="2287">
    <property type="antibodies" value="296 antibodies from 34 providers"/>
</dbReference>
<dbReference type="DNASU" id="9218"/>
<dbReference type="Ensembl" id="ENST00000340541.4">
    <molecule id="Q9P0L0-2"/>
    <property type="protein sequence ID" value="ENSP00000345656.4"/>
    <property type="gene ID" value="ENSG00000101558.14"/>
</dbReference>
<dbReference type="Ensembl" id="ENST00000400000.7">
    <molecule id="Q9P0L0-1"/>
    <property type="protein sequence ID" value="ENSP00000382880.3"/>
    <property type="gene ID" value="ENSG00000101558.14"/>
</dbReference>
<dbReference type="GeneID" id="9218"/>
<dbReference type="KEGG" id="hsa:9218"/>
<dbReference type="MANE-Select" id="ENST00000400000.7">
    <property type="protein sequence ID" value="ENSP00000382880.3"/>
    <property type="RefSeq nucleotide sequence ID" value="NM_194434.3"/>
    <property type="RefSeq protein sequence ID" value="NP_919415.2"/>
</dbReference>
<dbReference type="UCSC" id="uc002koj.4">
    <molecule id="Q9P0L0-1"/>
    <property type="organism name" value="human"/>
</dbReference>
<dbReference type="AGR" id="HGNC:12648"/>
<dbReference type="CTD" id="9218"/>
<dbReference type="DisGeNET" id="9218"/>
<dbReference type="GeneCards" id="VAPA"/>
<dbReference type="HGNC" id="HGNC:12648">
    <property type="gene designation" value="VAPA"/>
</dbReference>
<dbReference type="HPA" id="ENSG00000101558">
    <property type="expression patterns" value="Low tissue specificity"/>
</dbReference>
<dbReference type="MIM" id="605703">
    <property type="type" value="gene"/>
</dbReference>
<dbReference type="neXtProt" id="NX_Q9P0L0"/>
<dbReference type="OpenTargets" id="ENSG00000101558"/>
<dbReference type="PharmGKB" id="PA37272"/>
<dbReference type="VEuPathDB" id="HostDB:ENSG00000101558"/>
<dbReference type="GeneTree" id="ENSGT00940000154799"/>
<dbReference type="HOGENOM" id="CLU_032848_0_1_1"/>
<dbReference type="InParanoid" id="Q9P0L0"/>
<dbReference type="OMA" id="QKIDMME"/>
<dbReference type="OrthoDB" id="264603at2759"/>
<dbReference type="PAN-GO" id="Q9P0L0">
    <property type="GO annotations" value="4 GO annotations based on evolutionary models"/>
</dbReference>
<dbReference type="PhylomeDB" id="Q9P0L0"/>
<dbReference type="TreeFam" id="TF317024"/>
<dbReference type="PathwayCommons" id="Q9P0L0"/>
<dbReference type="Reactome" id="R-HSA-1660661">
    <property type="pathway name" value="Sphingolipid de novo biosynthesis"/>
</dbReference>
<dbReference type="Reactome" id="R-HSA-6798695">
    <property type="pathway name" value="Neutrophil degranulation"/>
</dbReference>
<dbReference type="Reactome" id="R-HSA-9609523">
    <property type="pathway name" value="Insertion of tail-anchored proteins into the endoplasmic reticulum membrane"/>
</dbReference>
<dbReference type="SignaLink" id="Q9P0L0"/>
<dbReference type="SIGNOR" id="Q9P0L0"/>
<dbReference type="BioGRID-ORCS" id="9218">
    <property type="hits" value="30 hits in 1156 CRISPR screens"/>
</dbReference>
<dbReference type="CD-CODE" id="FB4E32DD">
    <property type="entry name" value="Presynaptic clusters and postsynaptic densities"/>
</dbReference>
<dbReference type="ChiTaRS" id="VAPA">
    <property type="organism name" value="human"/>
</dbReference>
<dbReference type="EvolutionaryTrace" id="Q9P0L0"/>
<dbReference type="GeneWiki" id="VAPA"/>
<dbReference type="GenomeRNAi" id="9218"/>
<dbReference type="Pharos" id="Q9P0L0">
    <property type="development level" value="Tbio"/>
</dbReference>
<dbReference type="PRO" id="PR:Q9P0L0"/>
<dbReference type="Proteomes" id="UP000005640">
    <property type="component" value="Chromosome 18"/>
</dbReference>
<dbReference type="RNAct" id="Q9P0L0">
    <property type="molecule type" value="protein"/>
</dbReference>
<dbReference type="Bgee" id="ENSG00000101558">
    <property type="expression patterns" value="Expressed in endothelial cell and 213 other cell types or tissues"/>
</dbReference>
<dbReference type="ExpressionAtlas" id="Q9P0L0">
    <property type="expression patterns" value="baseline and differential"/>
</dbReference>
<dbReference type="GO" id="GO:0035577">
    <property type="term" value="C:azurophil granule membrane"/>
    <property type="evidence" value="ECO:0000304"/>
    <property type="project" value="Reactome"/>
</dbReference>
<dbReference type="GO" id="GO:0005923">
    <property type="term" value="C:bicellular tight junction"/>
    <property type="evidence" value="ECO:0007669"/>
    <property type="project" value="UniProtKB-SubCell"/>
</dbReference>
<dbReference type="GO" id="GO:0005829">
    <property type="term" value="C:cytosol"/>
    <property type="evidence" value="ECO:0000304"/>
    <property type="project" value="Reactome"/>
</dbReference>
<dbReference type="GO" id="GO:0005783">
    <property type="term" value="C:endoplasmic reticulum"/>
    <property type="evidence" value="ECO:0000314"/>
    <property type="project" value="HPA"/>
</dbReference>
<dbReference type="GO" id="GO:0005789">
    <property type="term" value="C:endoplasmic reticulum membrane"/>
    <property type="evidence" value="ECO:0000314"/>
    <property type="project" value="UniProtKB"/>
</dbReference>
<dbReference type="GO" id="GO:0000139">
    <property type="term" value="C:Golgi membrane"/>
    <property type="evidence" value="ECO:0000314"/>
    <property type="project" value="ComplexPortal"/>
</dbReference>
<dbReference type="GO" id="GO:0015630">
    <property type="term" value="C:microtubule cytoskeleton"/>
    <property type="evidence" value="ECO:0007669"/>
    <property type="project" value="Ensembl"/>
</dbReference>
<dbReference type="GO" id="GO:0031965">
    <property type="term" value="C:nuclear membrane"/>
    <property type="evidence" value="ECO:0007669"/>
    <property type="project" value="UniProtKB-SubCell"/>
</dbReference>
<dbReference type="GO" id="GO:0005886">
    <property type="term" value="C:plasma membrane"/>
    <property type="evidence" value="ECO:0000314"/>
    <property type="project" value="UniProtKB"/>
</dbReference>
<dbReference type="GO" id="GO:0031982">
    <property type="term" value="C:vesicle"/>
    <property type="evidence" value="ECO:0000314"/>
    <property type="project" value="UniProtKB"/>
</dbReference>
<dbReference type="GO" id="GO:0045296">
    <property type="term" value="F:cadherin binding"/>
    <property type="evidence" value="ECO:0007005"/>
    <property type="project" value="BHF-UCL"/>
</dbReference>
<dbReference type="GO" id="GO:0033149">
    <property type="term" value="F:FFAT motif binding"/>
    <property type="evidence" value="ECO:0000314"/>
    <property type="project" value="UniProtKB"/>
</dbReference>
<dbReference type="GO" id="GO:0008017">
    <property type="term" value="F:microtubule binding"/>
    <property type="evidence" value="ECO:0000315"/>
    <property type="project" value="UniProtKB"/>
</dbReference>
<dbReference type="GO" id="GO:0019904">
    <property type="term" value="F:protein domain specific binding"/>
    <property type="evidence" value="ECO:0000353"/>
    <property type="project" value="UniProtKB"/>
</dbReference>
<dbReference type="GO" id="GO:0046982">
    <property type="term" value="F:protein heterodimerization activity"/>
    <property type="evidence" value="ECO:0000353"/>
    <property type="project" value="UniProtKB"/>
</dbReference>
<dbReference type="GO" id="GO:0042803">
    <property type="term" value="F:protein homodimerization activity"/>
    <property type="evidence" value="ECO:0000314"/>
    <property type="project" value="UniProtKB"/>
</dbReference>
<dbReference type="GO" id="GO:0043495">
    <property type="term" value="F:protein-membrane adaptor activity"/>
    <property type="evidence" value="ECO:0000318"/>
    <property type="project" value="GO_Central"/>
</dbReference>
<dbReference type="GO" id="GO:0035627">
    <property type="term" value="P:ceramide transport"/>
    <property type="evidence" value="ECO:0000315"/>
    <property type="project" value="ComplexPortal"/>
</dbReference>
<dbReference type="GO" id="GO:0030301">
    <property type="term" value="P:cholesterol transport"/>
    <property type="evidence" value="ECO:0000314"/>
    <property type="project" value="UniProtKB"/>
</dbReference>
<dbReference type="GO" id="GO:0090114">
    <property type="term" value="P:COPII-coated vesicle budding"/>
    <property type="evidence" value="ECO:0000315"/>
    <property type="project" value="UniProtKB"/>
</dbReference>
<dbReference type="GO" id="GO:0006888">
    <property type="term" value="P:endoplasmic reticulum to Golgi vesicle-mediated transport"/>
    <property type="evidence" value="ECO:0000315"/>
    <property type="project" value="UniProtKB"/>
</dbReference>
<dbReference type="GO" id="GO:0061817">
    <property type="term" value="P:endoplasmic reticulum-plasma membrane tethering"/>
    <property type="evidence" value="ECO:0000314"/>
    <property type="project" value="UniProtKB"/>
</dbReference>
<dbReference type="GO" id="GO:0061025">
    <property type="term" value="P:membrane fusion"/>
    <property type="evidence" value="ECO:0000304"/>
    <property type="project" value="ProtInc"/>
</dbReference>
<dbReference type="GO" id="GO:0044828">
    <property type="term" value="P:negative regulation by host of viral genome replication"/>
    <property type="evidence" value="ECO:0000314"/>
    <property type="project" value="AgBase"/>
</dbReference>
<dbReference type="GO" id="GO:0031175">
    <property type="term" value="P:neuron projection development"/>
    <property type="evidence" value="ECO:0000315"/>
    <property type="project" value="UniProtKB"/>
</dbReference>
<dbReference type="GO" id="GO:0015914">
    <property type="term" value="P:phospholipid transport"/>
    <property type="evidence" value="ECO:0000314"/>
    <property type="project" value="ComplexPortal"/>
</dbReference>
<dbReference type="GO" id="GO:0044829">
    <property type="term" value="P:positive regulation by host of viral genome replication"/>
    <property type="evidence" value="ECO:0000314"/>
    <property type="project" value="AgBase"/>
</dbReference>
<dbReference type="GO" id="GO:0043123">
    <property type="term" value="P:positive regulation of canonical NF-kappaB signal transduction"/>
    <property type="evidence" value="ECO:0007001"/>
    <property type="project" value="UniProtKB"/>
</dbReference>
<dbReference type="GO" id="GO:0070972">
    <property type="term" value="P:protein localization to endoplasmic reticulum"/>
    <property type="evidence" value="ECO:0000315"/>
    <property type="project" value="UniProtKB"/>
</dbReference>
<dbReference type="GO" id="GO:0006686">
    <property type="term" value="P:sphingomyelin biosynthetic process"/>
    <property type="evidence" value="ECO:0000315"/>
    <property type="project" value="ComplexPortal"/>
</dbReference>
<dbReference type="GO" id="GO:0015918">
    <property type="term" value="P:sterol transport"/>
    <property type="evidence" value="ECO:0000314"/>
    <property type="project" value="ComplexPortal"/>
</dbReference>
<dbReference type="GO" id="GO:0019076">
    <property type="term" value="P:viral release from host cell"/>
    <property type="evidence" value="ECO:0000314"/>
    <property type="project" value="AgBase"/>
</dbReference>
<dbReference type="FunFam" id="2.60.40.10:FF:000334">
    <property type="entry name" value="vesicle-associated membrane protein-associated protein A isoform X1"/>
    <property type="match status" value="1"/>
</dbReference>
<dbReference type="Gene3D" id="2.60.40.10">
    <property type="entry name" value="Immunoglobulins"/>
    <property type="match status" value="1"/>
</dbReference>
<dbReference type="InterPro" id="IPR013783">
    <property type="entry name" value="Ig-like_fold"/>
</dbReference>
<dbReference type="InterPro" id="IPR000535">
    <property type="entry name" value="MSP_dom"/>
</dbReference>
<dbReference type="InterPro" id="IPR008962">
    <property type="entry name" value="PapD-like_sf"/>
</dbReference>
<dbReference type="InterPro" id="IPR016763">
    <property type="entry name" value="VAP"/>
</dbReference>
<dbReference type="PANTHER" id="PTHR10809">
    <property type="entry name" value="VESICLE-ASSOCIATED MEMBRANE PROTEIN-ASSOCIATED PROTEIN"/>
    <property type="match status" value="1"/>
</dbReference>
<dbReference type="PANTHER" id="PTHR10809:SF155">
    <property type="entry name" value="VESICLE-ASSOCIATED MEMBRANE PROTEIN-ASSOCIATED PROTEIN A"/>
    <property type="match status" value="1"/>
</dbReference>
<dbReference type="Pfam" id="PF00635">
    <property type="entry name" value="Motile_Sperm"/>
    <property type="match status" value="1"/>
</dbReference>
<dbReference type="PIRSF" id="PIRSF019693">
    <property type="entry name" value="VAMP-associated"/>
    <property type="match status" value="1"/>
</dbReference>
<dbReference type="SUPFAM" id="SSF49354">
    <property type="entry name" value="PapD-like"/>
    <property type="match status" value="1"/>
</dbReference>
<dbReference type="PROSITE" id="PS50202">
    <property type="entry name" value="MSP"/>
    <property type="match status" value="1"/>
</dbReference>
<evidence type="ECO:0000250" key="1">
    <source>
        <dbReference type="UniProtKB" id="Q9Z270"/>
    </source>
</evidence>
<evidence type="ECO:0000255" key="2"/>
<evidence type="ECO:0000255" key="3">
    <source>
        <dbReference type="PROSITE-ProRule" id="PRU00132"/>
    </source>
</evidence>
<evidence type="ECO:0000256" key="4">
    <source>
        <dbReference type="SAM" id="MobiDB-lite"/>
    </source>
</evidence>
<evidence type="ECO:0000269" key="5">
    <source>
    </source>
</evidence>
<evidence type="ECO:0000269" key="6">
    <source>
    </source>
</evidence>
<evidence type="ECO:0000269" key="7">
    <source>
    </source>
</evidence>
<evidence type="ECO:0000269" key="8">
    <source>
    </source>
</evidence>
<evidence type="ECO:0000269" key="9">
    <source>
    </source>
</evidence>
<evidence type="ECO:0000269" key="10">
    <source>
    </source>
</evidence>
<evidence type="ECO:0000269" key="11">
    <source>
    </source>
</evidence>
<evidence type="ECO:0000269" key="12">
    <source>
    </source>
</evidence>
<evidence type="ECO:0000269" key="13">
    <source>
    </source>
</evidence>
<evidence type="ECO:0000269" key="14">
    <source>
    </source>
</evidence>
<evidence type="ECO:0000269" key="15">
    <source>
    </source>
</evidence>
<evidence type="ECO:0000269" key="16">
    <source>
    </source>
</evidence>
<evidence type="ECO:0000269" key="17">
    <source>
    </source>
</evidence>
<evidence type="ECO:0000269" key="18">
    <source>
    </source>
</evidence>
<evidence type="ECO:0000269" key="19">
    <source>
    </source>
</evidence>
<evidence type="ECO:0000269" key="20">
    <source>
    </source>
</evidence>
<evidence type="ECO:0000303" key="21">
    <source>
    </source>
</evidence>
<evidence type="ECO:0000303" key="22">
    <source>
    </source>
</evidence>
<evidence type="ECO:0000303" key="23">
    <source>
    </source>
</evidence>
<evidence type="ECO:0000303" key="24">
    <source ref="2"/>
</evidence>
<evidence type="ECO:0000305" key="25"/>
<evidence type="ECO:0000312" key="26">
    <source>
        <dbReference type="HGNC" id="HGNC:12648"/>
    </source>
</evidence>
<evidence type="ECO:0007744" key="27">
    <source>
        <dbReference type="PDB" id="2RR3"/>
    </source>
</evidence>
<evidence type="ECO:0007744" key="28">
    <source>
        <dbReference type="PDB" id="6TQR"/>
    </source>
</evidence>
<evidence type="ECO:0007744" key="29">
    <source>
    </source>
</evidence>
<evidence type="ECO:0007744" key="30">
    <source>
    </source>
</evidence>
<evidence type="ECO:0007744" key="31">
    <source>
    </source>
</evidence>
<evidence type="ECO:0007744" key="32">
    <source>
    </source>
</evidence>
<evidence type="ECO:0007829" key="33">
    <source>
        <dbReference type="PDB" id="6TQR"/>
    </source>
</evidence>
<gene>
    <name evidence="26" type="primary">VAPA</name>
    <name type="synonym">VAP33</name>
</gene>
<keyword id="KW-0002">3D-structure</keyword>
<keyword id="KW-0007">Acetylation</keyword>
<keyword id="KW-0025">Alternative splicing</keyword>
<keyword id="KW-0965">Cell junction</keyword>
<keyword id="KW-1003">Cell membrane</keyword>
<keyword id="KW-0175">Coiled coil</keyword>
<keyword id="KW-1015">Disulfide bond</keyword>
<keyword id="KW-0256">Endoplasmic reticulum</keyword>
<keyword id="KW-0945">Host-virus interaction</keyword>
<keyword id="KW-0472">Membrane</keyword>
<keyword id="KW-0539">Nucleus</keyword>
<keyword id="KW-0597">Phosphoprotein</keyword>
<keyword id="KW-1267">Proteomics identification</keyword>
<keyword id="KW-1185">Reference proteome</keyword>
<keyword id="KW-0796">Tight junction</keyword>
<keyword id="KW-0812">Transmembrane</keyword>
<keyword id="KW-1133">Transmembrane helix</keyword>
<comment type="function">
    <text evidence="6 7 9 15 18 19">Endoplasmic reticulum (ER)-anchored protein that mediates the formation of contact sites between the ER and endosomes via interaction with FFAT motif-containing proteins such as STARD3 or WDR44 (PubMed:32344433, PubMed:33124732). STARD3-VAPA interaction enables cholesterol transfer from the ER to endosomes (PubMed:33124732). Via interaction with WDR44 participates in neosynthesized protein export (PubMed:32344433). In addition, recruited to the plasma membrane through OSBPL3 binding (PubMed:25447204). The OSBPL3-VAPA complex stimulates RRAS signaling which in turn attenuates integrin beta-1 (ITGB1) activation at the cell surface (PubMed:25447204). With OSBPL3, may regulate ER morphology (PubMed:16143324). May play a role in vesicle trafficking (PubMed:11511104, PubMed:19289470).</text>
</comment>
<comment type="subunit">
    <text evidence="5 6 7 8 9 10 11 12 13 14 15 16 17 18 19 20">Homodimer; disulfide-linked (PubMed:11511104, PubMed:33124732). Heterodimer with VAPB (PubMed:11511104). Interacts with VAMP1, VAMP2, STX1A, BET1, SEC22C and with the C-terminal domain of OCLN (PubMed:10523508, PubMed:11511104, PubMed:9657962). Interacts (via MSP domain) with OSBPL1A (via FFAT motif) (PubMed:33124732). Interacts (via MSP domain) with ZFYVE27; may retain ZFYVE27 in the endoplasmic reticulum and regulate its function in cell projections formation (PubMed:19289470, PubMed:21976701). Interacts with OSBP (PubMed:20178991). Interacts (via C-terminus) with RSAD2/viperin (via C-terminus) (PubMed:21957124). Interacts with IFITM3 (PubMed:23601107). Interacts with OSBPL3 (phosphorylated form) (PubMed:16143324, PubMed:25447204). Interacts with KIF5A in a ZFYVE27-dependent manner (PubMed:21976701). Interacts (via MSP domain) with STARD3 (via phosphorylated FFAT motif); this interaction recruits VAPA to the endosome (PubMed:24105263, PubMed:33124732). Interacts with STARD3NL (via FFAT motif) (PubMed:24105263). Interacts with CERT1 (PubMed:16895911). Interacts with PLEKHA3 and SACM1L to form a ternary complex (PubMed:30659099). Interacts with VPS13A (via FFAT motif) (PubMed:30741634). Interacts with RB1CC1 (via phosphorylated FFAT motif), MIGA2 (via phosphorylated FFAT motif), RMDN3 (via phosphorylated FFAT motif), KCNB1 (via phosphorylated FFAT motif) and KCNB2 (via phosphorylated FFAT motif) (PubMed:33124732). Interacts (via MSP domain) with WDR44 (via FFAT-like motif); the interactions connect the endoplasmic reticulum (ER) with the endosomal tubule (PubMed:32344433).</text>
</comment>
<comment type="subunit">
    <text evidence="11">(Microbial infection) Interacts with HCV protein NS5A and NS5B (PubMed:21957124).</text>
</comment>
<comment type="interaction">
    <interactant intactId="EBI-1059156">
        <id>Q9P0L0</id>
    </interactant>
    <interactant intactId="EBI-10290200">
        <id>Q96K78</id>
        <label>ADGRG7</label>
    </interactant>
    <organismsDiffer>false</organismsDiffer>
    <experiments>3</experiments>
</comment>
<comment type="interaction">
    <interactant intactId="EBI-1059156">
        <id>Q9P0L0</id>
    </interactant>
    <interactant intactId="EBI-715495">
        <id>P05090</id>
        <label>APOD</label>
    </interactant>
    <organismsDiffer>false</organismsDiffer>
    <experiments>6</experiments>
</comment>
<comment type="interaction">
    <interactant intactId="EBI-1059156">
        <id>Q9P0L0</id>
    </interactant>
    <interactant intactId="EBI-13059134">
        <id>Q13520</id>
        <label>AQP6</label>
    </interactant>
    <organismsDiffer>false</organismsDiffer>
    <experiments>3</experiments>
</comment>
<comment type="interaction">
    <interactant intactId="EBI-1059156">
        <id>Q9P0L0</id>
    </interactant>
    <interactant intactId="EBI-9686780">
        <id>Q06432</id>
        <label>CACNG1</label>
    </interactant>
    <organismsDiffer>false</organismsDiffer>
    <experiments>3</experiments>
</comment>
<comment type="interaction">
    <interactant intactId="EBI-1059156">
        <id>Q9P0L0</id>
    </interactant>
    <interactant intactId="EBI-7797864">
        <id>P11912</id>
        <label>CD79A</label>
    </interactant>
    <organismsDiffer>false</organismsDiffer>
    <experiments>3</experiments>
</comment>
<comment type="interaction">
    <interactant intactId="EBI-1059156">
        <id>Q9P0L0</id>
    </interactant>
    <interactant intactId="EBI-349854">
        <id>P13569</id>
        <label>CFTR</label>
    </interactant>
    <organismsDiffer>false</organismsDiffer>
    <experiments>13</experiments>
</comment>
<comment type="interaction">
    <interactant intactId="EBI-1059156">
        <id>Q9P0L0</id>
    </interactant>
    <interactant intactId="EBI-8646596">
        <id>P49447</id>
        <label>CYB561</label>
    </interactant>
    <organismsDiffer>false</organismsDiffer>
    <experiments>3</experiments>
</comment>
<comment type="interaction">
    <interactant intactId="EBI-1059156">
        <id>Q9P0L0</id>
    </interactant>
    <interactant intactId="EBI-8637742">
        <id>Q53TN4</id>
        <label>CYBRD1</label>
    </interactant>
    <organismsDiffer>false</organismsDiffer>
    <experiments>3</experiments>
</comment>
<comment type="interaction">
    <interactant intactId="EBI-1059156">
        <id>Q9P0L0</id>
    </interactant>
    <interactant intactId="EBI-8787095">
        <id>O00559</id>
        <label>EBAG9</label>
    </interactant>
    <organismsDiffer>false</organismsDiffer>
    <experiments>3</experiments>
</comment>
<comment type="interaction">
    <interactant intactId="EBI-1059156">
        <id>Q9P0L0</id>
    </interactant>
    <interactant intactId="EBI-3915253">
        <id>Q15125</id>
        <label>EBP</label>
    </interactant>
    <organismsDiffer>false</organismsDiffer>
    <experiments>3</experiments>
</comment>
<comment type="interaction">
    <interactant intactId="EBI-1059156">
        <id>Q9P0L0</id>
    </interactant>
    <interactant intactId="EBI-297353">
        <id>P00533</id>
        <label>EGFR</label>
    </interactant>
    <organismsDiffer>false</organismsDiffer>
    <experiments>4</experiments>
</comment>
<comment type="interaction">
    <interactant intactId="EBI-1059156">
        <id>Q9P0L0</id>
    </interactant>
    <interactant intactId="EBI-3933251">
        <id>Q9NS71</id>
        <label>GKN1</label>
    </interactant>
    <organismsDiffer>false</organismsDiffer>
    <experiments>3</experiments>
</comment>
<comment type="interaction">
    <interactant intactId="EBI-1059156">
        <id>Q9P0L0</id>
    </interactant>
    <interactant intactId="EBI-359013">
        <id>Q9P035</id>
        <label>HACD3</label>
    </interactant>
    <organismsDiffer>false</organismsDiffer>
    <experiments>2</experiments>
</comment>
<comment type="interaction">
    <interactant intactId="EBI-1059156">
        <id>Q9P0L0</id>
    </interactant>
    <interactant intactId="EBI-1052304">
        <id>Q8NBQ5</id>
        <label>HSD17B11</label>
    </interactant>
    <organismsDiffer>false</organismsDiffer>
    <experiments>3</experiments>
</comment>
<comment type="interaction">
    <interactant intactId="EBI-1059156">
        <id>Q9P0L0</id>
    </interactant>
    <interactant intactId="EBI-18053395">
        <id>Q7Z5P4</id>
        <label>HSD17B13</label>
    </interactant>
    <organismsDiffer>false</organismsDiffer>
    <experiments>3</experiments>
</comment>
<comment type="interaction">
    <interactant intactId="EBI-1059156">
        <id>Q9P0L0</id>
    </interactant>
    <interactant intactId="EBI-10266796">
        <id>Q8N5M9</id>
        <label>JAGN1</label>
    </interactant>
    <organismsDiffer>false</organismsDiffer>
    <experiments>3</experiments>
</comment>
<comment type="interaction">
    <interactant intactId="EBI-1059156">
        <id>Q9P0L0</id>
    </interactant>
    <interactant intactId="EBI-750776">
        <id>O95214</id>
        <label>LEPROTL1</label>
    </interactant>
    <organismsDiffer>false</organismsDiffer>
    <experiments>3</experiments>
</comment>
<comment type="interaction">
    <interactant intactId="EBI-1059156">
        <id>Q9P0L0</id>
    </interactant>
    <interactant intactId="EBI-2624570">
        <id>P35372</id>
        <label>OPRM1</label>
    </interactant>
    <organismsDiffer>false</organismsDiffer>
    <experiments>4</experiments>
</comment>
<comment type="interaction">
    <interactant intactId="EBI-1059156">
        <id>Q9P0L0</id>
    </interactant>
    <interactant intactId="EBI-2681902">
        <id>P22059</id>
        <label>OSBP</label>
    </interactant>
    <organismsDiffer>false</organismsDiffer>
    <experiments>9</experiments>
</comment>
<comment type="interaction">
    <interactant intactId="EBI-1059156">
        <id>Q9P0L0</id>
    </interactant>
    <interactant intactId="EBI-765918">
        <id>Q9BXW6</id>
        <label>OSBPL1A</label>
    </interactant>
    <organismsDiffer>false</organismsDiffer>
    <experiments>6</experiments>
</comment>
<comment type="interaction">
    <interactant intactId="EBI-1059156">
        <id>Q9P0L0</id>
    </interactant>
    <interactant intactId="EBI-2828285">
        <id>Q9H1P3</id>
        <label>OSBPL2</label>
    </interactant>
    <organismsDiffer>false</organismsDiffer>
    <experiments>3</experiments>
</comment>
<comment type="interaction">
    <interactant intactId="EBI-1059156">
        <id>Q9P0L0</id>
    </interactant>
    <interactant intactId="EBI-1050125">
        <id>O15173</id>
        <label>PGRMC2</label>
    </interactant>
    <organismsDiffer>false</organismsDiffer>
    <experiments>5</experiments>
</comment>
<comment type="interaction">
    <interactant intactId="EBI-1059156">
        <id>Q9P0L0</id>
    </interactant>
    <interactant intactId="EBI-10192441">
        <id>Q86VR2</id>
        <label>RETREG3</label>
    </interactant>
    <organismsDiffer>false</organismsDiffer>
    <experiments>3</experiments>
</comment>
<comment type="interaction">
    <interactant intactId="EBI-1059156">
        <id>Q9P0L0</id>
    </interactant>
    <interactant intactId="EBI-2806908">
        <id>Q96LZ7</id>
        <label>RMDN2</label>
    </interactant>
    <organismsDiffer>false</organismsDiffer>
    <experiments>7</experiments>
</comment>
<comment type="interaction">
    <interactant intactId="EBI-1059156">
        <id>Q9P0L0</id>
    </interactant>
    <interactant intactId="EBI-1056589">
        <id>Q96TC7</id>
        <label>RMDN3</label>
    </interactant>
    <organismsDiffer>false</organismsDiffer>
    <experiments>6</experiments>
</comment>
<comment type="interaction">
    <interactant intactId="EBI-1059156">
        <id>Q9P0L0</id>
    </interactant>
    <interactant intactId="EBI-12736320">
        <id>Q8WXG1</id>
        <label>RSAD2</label>
    </interactant>
    <organismsDiffer>false</organismsDiffer>
    <experiments>10</experiments>
</comment>
<comment type="interaction">
    <interactant intactId="EBI-1059156">
        <id>Q9P0L0</id>
    </interactant>
    <interactant intactId="EBI-17247926">
        <id>Q9NY72</id>
        <label>SCN3B</label>
    </interactant>
    <organismsDiffer>false</organismsDiffer>
    <experiments>3</experiments>
</comment>
<comment type="interaction">
    <interactant intactId="EBI-1059156">
        <id>Q9P0L0</id>
    </interactant>
    <interactant intactId="EBI-2855401">
        <id>Q9BY50</id>
        <label>SEC11C</label>
    </interactant>
    <organismsDiffer>false</organismsDiffer>
    <experiments>3</experiments>
</comment>
<comment type="interaction">
    <interactant intactId="EBI-1059156">
        <id>Q9P0L0</id>
    </interactant>
    <interactant intactId="EBI-3921243">
        <id>O60669</id>
        <label>SLC16A7</label>
    </interactant>
    <organismsDiffer>false</organismsDiffer>
    <experiments>3</experiments>
</comment>
<comment type="interaction">
    <interactant intactId="EBI-1059156">
        <id>Q9P0L0</id>
    </interactant>
    <interactant intactId="EBI-12147661">
        <id>P78383</id>
        <label>SLC35B1</label>
    </interactant>
    <organismsDiffer>false</organismsDiffer>
    <experiments>3</experiments>
</comment>
<comment type="interaction">
    <interactant intactId="EBI-1059156">
        <id>Q9P0L0</id>
    </interactant>
    <interactant intactId="EBI-9819369">
        <id>Q14849-1</id>
        <label>STARD3</label>
    </interactant>
    <organismsDiffer>false</organismsDiffer>
    <experiments>4</experiments>
</comment>
<comment type="interaction">
    <interactant intactId="EBI-1059156">
        <id>Q9P0L0</id>
    </interactant>
    <interactant intactId="EBI-12195227">
        <id>Q8NBD8</id>
        <label>TMEM229B</label>
    </interactant>
    <organismsDiffer>false</organismsDiffer>
    <experiments>3</experiments>
</comment>
<comment type="interaction">
    <interactant intactId="EBI-1059156">
        <id>Q9P0L0</id>
    </interactant>
    <interactant intactId="EBI-11722971">
        <id>Q53FP2</id>
        <label>TMEM35A</label>
    </interactant>
    <organismsDiffer>false</organismsDiffer>
    <experiments>3</experiments>
</comment>
<comment type="interaction">
    <interactant intactId="EBI-1059156">
        <id>Q9P0L0</id>
    </interactant>
    <interactant intactId="EBI-2548832">
        <id>Q8N661</id>
        <label>TMEM86B</label>
    </interactant>
    <organismsDiffer>false</organismsDiffer>
    <experiments>3</experiments>
</comment>
<comment type="interaction">
    <interactant intactId="EBI-1059156">
        <id>Q9P0L0</id>
    </interactant>
    <interactant intactId="EBI-6447886">
        <id>Q9Y320</id>
        <label>TMX2</label>
    </interactant>
    <organismsDiffer>false</organismsDiffer>
    <experiments>3</experiments>
</comment>
<comment type="interaction">
    <interactant intactId="EBI-1059156">
        <id>Q9P0L0</id>
    </interactant>
    <interactant intactId="EBI-2511991">
        <id>Q9Y2K6</id>
        <label>USP20</label>
    </interactant>
    <organismsDiffer>false</organismsDiffer>
    <experiments>6</experiments>
</comment>
<comment type="interaction">
    <interactant intactId="EBI-1059156">
        <id>Q9P0L0</id>
    </interactant>
    <interactant intactId="EBI-1188298">
        <id>O95292</id>
        <label>VAPB</label>
    </interactant>
    <organismsDiffer>false</organismsDiffer>
    <experiments>8</experiments>
</comment>
<comment type="interaction">
    <interactant intactId="EBI-1059156">
        <id>Q9P0L0</id>
    </interactant>
    <interactant intactId="EBI-9350848">
        <id>O95292-1</id>
        <label>VAPB</label>
    </interactant>
    <organismsDiffer>false</organismsDiffer>
    <experiments>2</experiments>
</comment>
<comment type="interaction">
    <interactant intactId="EBI-1059156">
        <id>Q9P0L0</id>
    </interactant>
    <interactant intactId="EBI-2799703">
        <id>O95070</id>
        <label>YIF1A</label>
    </interactant>
    <organismsDiffer>false</organismsDiffer>
    <experiments>3</experiments>
</comment>
<comment type="interaction">
    <interactant intactId="EBI-1059156">
        <id>Q9P0L0</id>
    </interactant>
    <interactant intactId="EBI-723574">
        <id>O15209</id>
        <label>ZBTB22</label>
    </interactant>
    <organismsDiffer>false</organismsDiffer>
    <experiments>3</experiments>
</comment>
<comment type="interaction">
    <interactant intactId="EBI-1059156">
        <id>Q9P0L0</id>
    </interactant>
    <interactant intactId="EBI-3892947">
        <id>Q5T4F4</id>
        <label>ZFYVE27</label>
    </interactant>
    <organismsDiffer>false</organismsDiffer>
    <experiments>7</experiments>
</comment>
<comment type="interaction">
    <interactant intactId="EBI-1059156">
        <id>Q9P0L0</id>
    </interactant>
    <interactant intactId="EBI-8753518">
        <id>PRO_0000037576</id>
        <dbReference type="UniProtKB" id="P27958"/>
    </interactant>
    <organismsDiffer>true</organismsDiffer>
    <experiments>7</experiments>
</comment>
<comment type="interaction">
    <interactant intactId="EBI-1059156">
        <id>Q9P0L0</id>
    </interactant>
    <interactant intactId="EBI-6904388">
        <id>PRO_0000037577</id>
        <dbReference type="UniProtKB" id="P27958"/>
    </interactant>
    <organismsDiffer>true</organismsDiffer>
    <experiments>5</experiments>
</comment>
<comment type="interaction">
    <interactant intactId="EBI-1059156">
        <id>Q9P0L0</id>
    </interactant>
    <interactant intactId="EBI-8803426">
        <id>PRO_0000278740</id>
        <dbReference type="UniProtKB" id="Q03463"/>
    </interactant>
    <organismsDiffer>true</organismsDiffer>
    <experiments>4</experiments>
</comment>
<comment type="interaction">
    <interactant intactId="EBI-1059156">
        <id>Q9P0L0</id>
    </interactant>
    <interactant intactId="EBI-8803474">
        <id>PRO_0000278741</id>
        <dbReference type="UniProtKB" id="Q03463"/>
    </interactant>
    <organismsDiffer>true</organismsDiffer>
    <experiments>3</experiments>
</comment>
<comment type="interaction">
    <interactant intactId="EBI-1059156">
        <id>Q9P0L0</id>
    </interactant>
    <interactant intactId="EBI-9096996">
        <id>PRO_0000045600</id>
        <dbReference type="UniProtKB" id="Q99IB8"/>
    </interactant>
    <organismsDiffer>true</organismsDiffer>
    <experiments>3</experiments>
</comment>
<comment type="interaction">
    <interactant intactId="EBI-1059156">
        <id>Q9P0L0</id>
    </interactant>
    <interactant intactId="EBI-6927873">
        <id>PRO_0000045602</id>
        <dbReference type="UniProtKB" id="Q99IB8"/>
    </interactant>
    <organismsDiffer>true</organismsDiffer>
    <experiments>2</experiments>
</comment>
<comment type="interaction">
    <interactant intactId="EBI-1059156">
        <id>Q9P0L0</id>
    </interactant>
    <interactant intactId="EBI-6863748">
        <id>PRO_0000037551</id>
        <dbReference type="UniProtKB" id="Q9WMX2"/>
    </interactant>
    <organismsDiffer>true</organismsDiffer>
    <experiments>10</experiments>
</comment>
<comment type="interaction">
    <interactant intactId="EBI-1059156">
        <id>Q9P0L0</id>
    </interactant>
    <interactant intactId="EBI-9005440">
        <id>PRO_0000037552</id>
        <dbReference type="UniProtKB" id="Q9WMX2"/>
    </interactant>
    <organismsDiffer>true</organismsDiffer>
    <experiments>4</experiments>
</comment>
<comment type="subcellular location">
    <subcellularLocation>
        <location evidence="5 7 9 15 17 18 19">Endoplasmic reticulum membrane</location>
        <topology evidence="5 9">Single-pass type IV membrane protein</topology>
    </subcellularLocation>
    <subcellularLocation>
        <location evidence="15">Cell membrane</location>
        <topology evidence="25">Single-pass type IV membrane protein</topology>
    </subcellularLocation>
    <subcellularLocation>
        <location evidence="5">Cell junction</location>
        <location evidence="5">Tight junction</location>
    </subcellularLocation>
    <subcellularLocation>
        <location evidence="1">Nucleus membrane</location>
    </subcellularLocation>
    <text evidence="5">Present in the plasma membrane and in intracellular vesicles, together with SNARE proteins. May also associate with the cytoskeleton. Colocalizes with OCLN at the tight junction in polarized epithelial cells.</text>
</comment>
<comment type="alternative products">
    <event type="alternative splicing"/>
    <isoform>
        <id>Q9P0L0-1</id>
        <name>1</name>
        <sequence type="displayed"/>
    </isoform>
    <isoform>
        <id>Q9P0L0-2</id>
        <name>2</name>
        <sequence type="described" ref="VSP_038648"/>
    </isoform>
</comment>
<comment type="tissue specificity">
    <text>Ubiquitous.</text>
</comment>
<comment type="domain">
    <text evidence="18">The MSP domain binds the FFAT motif of many proteins.</text>
</comment>
<comment type="similarity">
    <text evidence="25">Belongs to the VAMP-associated protein (VAP) (TC 9.B.17) family.</text>
</comment>
<comment type="sequence caution" evidence="25">
    <conflict type="erroneous initiation">
        <sequence resource="EMBL-CDS" id="AAD09742"/>
    </conflict>
    <text>Truncated N-terminus.</text>
</comment>
<comment type="sequence caution" evidence="25">
    <conflict type="erroneous initiation">
        <sequence resource="EMBL-CDS" id="AAF72105"/>
    </conflict>
    <text>Truncated N-terminus.</text>
</comment>
<comment type="sequence caution" evidence="25">
    <conflict type="frameshift">
        <sequence resource="EMBL" id="BG488667"/>
    </conflict>
</comment>
<organism>
    <name type="scientific">Homo sapiens</name>
    <name type="common">Human</name>
    <dbReference type="NCBI Taxonomy" id="9606"/>
    <lineage>
        <taxon>Eukaryota</taxon>
        <taxon>Metazoa</taxon>
        <taxon>Chordata</taxon>
        <taxon>Craniata</taxon>
        <taxon>Vertebrata</taxon>
        <taxon>Euteleostomi</taxon>
        <taxon>Mammalia</taxon>
        <taxon>Eutheria</taxon>
        <taxon>Euarchontoglires</taxon>
        <taxon>Primates</taxon>
        <taxon>Haplorrhini</taxon>
        <taxon>Catarrhini</taxon>
        <taxon>Hominidae</taxon>
        <taxon>Homo</taxon>
    </lineage>
</organism>
<sequence length="249" mass="27893">MASASGAMAKHEQILVLDPPTDLKFKGPFTDVVTTNLKLRNPSDRKVCFKVKTTAPRRYCVRPNSGIIDPGSTVTVSVMLQPFDYDPNEKSKHKFMVQTIFAPPNTSDMEAVWKEAKPDELMDSKLRCVFEMPNENDKLNDMEPSKAVPLNASKQDGPMPKPHSVSLNDTETRKLMEECKRLQGEMMKLSEENRHLRDEGLRLRKVAHSDKPGSTSTASFRDNVTSPLPSLLVVIAAIFIGFFLGKFIL</sequence>
<feature type="initiator methionine" description="Removed" evidence="32">
    <location>
        <position position="1"/>
    </location>
</feature>
<feature type="chain" id="PRO_0000213470" description="Vesicle-associated membrane protein-associated protein A">
    <location>
        <begin position="2"/>
        <end position="249"/>
    </location>
</feature>
<feature type="topological domain" description="Cytoplasmic" evidence="2">
    <location>
        <begin position="2"/>
        <end position="227"/>
    </location>
</feature>
<feature type="transmembrane region" description="Helical; Anchor for type IV membrane protein" evidence="2">
    <location>
        <begin position="228"/>
        <end position="248"/>
    </location>
</feature>
<feature type="domain" description="MSP" evidence="3">
    <location>
        <begin position="14"/>
        <end position="131"/>
    </location>
</feature>
<feature type="region of interest" description="phosphorylated FFAT motif binding" evidence="19 28">
    <location>
        <begin position="50"/>
        <end position="53"/>
    </location>
</feature>
<feature type="region of interest" description="Disordered" evidence="4">
    <location>
        <begin position="135"/>
        <end position="167"/>
    </location>
</feature>
<feature type="coiled-coil region" evidence="2">
    <location>
        <begin position="169"/>
        <end position="205"/>
    </location>
</feature>
<feature type="compositionally biased region" description="Basic and acidic residues" evidence="4">
    <location>
        <begin position="135"/>
        <end position="144"/>
    </location>
</feature>
<feature type="site" description="Involved in binding the phosphorylated serine of the phospho-FFAT motif" evidence="19">
    <location>
        <position position="50"/>
    </location>
</feature>
<feature type="modified residue" description="N-acetylalanine" evidence="32">
    <location>
        <position position="2"/>
    </location>
</feature>
<feature type="modified residue" description="N6-acetyllysine" evidence="29">
    <location>
        <position position="125"/>
    </location>
</feature>
<feature type="modified residue" description="Phosphoserine" evidence="30">
    <location>
        <position position="166"/>
    </location>
</feature>
<feature type="modified residue" description="Phosphothreonine" evidence="30">
    <location>
        <position position="170"/>
    </location>
</feature>
<feature type="modified residue" description="Phosphoserine" evidence="30 31">
    <location>
        <position position="214"/>
    </location>
</feature>
<feature type="modified residue" description="Phosphoserine" evidence="30">
    <location>
        <position position="216"/>
    </location>
</feature>
<feature type="modified residue" description="Phosphoserine" evidence="30">
    <location>
        <position position="219"/>
    </location>
</feature>
<feature type="disulfide bond" description="Interchain" evidence="19">
    <location>
        <position position="60"/>
    </location>
</feature>
<feature type="splice variant" id="VSP_038648" description="In isoform 2." evidence="22">
    <original>L</original>
    <variation>LGITPPGNAPTVTSMSSINNTVATPASYHTKDDPRGLSVLKQEKQK</variation>
    <location>
        <position position="139"/>
    </location>
</feature>
<feature type="sequence variant" id="VAR_050440" description="In dbSNP:rs1044163.">
    <original>M</original>
    <variation>T</variation>
    <location>
        <position position="8"/>
    </location>
</feature>
<feature type="sequence variant" id="VAR_050441" description="In dbSNP:rs1127666.">
    <original>P</original>
    <variation>L</variation>
    <location>
        <position position="104"/>
    </location>
</feature>
<feature type="mutagenesis site" description="Impaired interaction with WDR44." evidence="18">
    <location>
        <begin position="1"/>
        <end position="151"/>
    </location>
</feature>
<feature type="mutagenesis site" description="Impairs the interaction of the MSP domain with the phosphorylated FFAT motif of STARD3. Does not affect its ability to interact with the conventional FFAT motif of OSBPL1A." evidence="19">
    <original>K</original>
    <variation>L</variation>
    <location>
        <position position="50"/>
    </location>
</feature>
<feature type="mutagenesis site" description="Alters interaction with ZFYVE27, impairs interaction with WDR44 and prevents binding to the FFAT motif in target proteins; when associated with D-96." evidence="9 18">
    <original>K</original>
    <variation>D</variation>
    <location>
        <position position="94"/>
    </location>
</feature>
<feature type="mutagenesis site" description="Alters interaction with ZFYVE27, impairs interaction with WDR44 and prevents binding to the FFAT motif in target proteins; when associated with D-94." evidence="9 18">
    <original>M</original>
    <variation>D</variation>
    <location>
        <position position="96"/>
    </location>
</feature>
<feature type="sequence conflict" description="In Ref. 6; AAC26508 and 8; AAV38424." evidence="25" ref="6 8">
    <original>KH</original>
    <variation>ND</variation>
    <location>
        <begin position="10"/>
        <end position="11"/>
    </location>
</feature>
<feature type="sequence conflict" description="In Ref. 2; AAF72105." evidence="25" ref="2">
    <original>P</original>
    <variation>S</variation>
    <location>
        <position position="160"/>
    </location>
</feature>
<feature type="strand" evidence="33">
    <location>
        <begin position="15"/>
        <end position="27"/>
    </location>
</feature>
<feature type="strand" evidence="33">
    <location>
        <begin position="33"/>
        <end position="40"/>
    </location>
</feature>
<feature type="strand" evidence="33">
    <location>
        <begin position="43"/>
        <end position="45"/>
    </location>
</feature>
<feature type="strand" evidence="33">
    <location>
        <begin position="47"/>
        <end position="54"/>
    </location>
</feature>
<feature type="turn" evidence="33">
    <location>
        <begin position="56"/>
        <end position="58"/>
    </location>
</feature>
<feature type="strand" evidence="33">
    <location>
        <begin position="59"/>
        <end position="68"/>
    </location>
</feature>
<feature type="strand" evidence="33">
    <location>
        <begin position="73"/>
        <end position="80"/>
    </location>
</feature>
<feature type="strand" evidence="33">
    <location>
        <begin position="94"/>
        <end position="101"/>
    </location>
</feature>
<feature type="helix" evidence="33">
    <location>
        <begin position="109"/>
        <end position="115"/>
    </location>
</feature>
<feature type="helix" evidence="33">
    <location>
        <begin position="118"/>
        <end position="120"/>
    </location>
</feature>
<feature type="strand" evidence="33">
    <location>
        <begin position="122"/>
        <end position="131"/>
    </location>
</feature>
<proteinExistence type="evidence at protein level"/>
<protein>
    <recommendedName>
        <fullName evidence="25">Vesicle-associated membrane protein-associated protein A</fullName>
        <shortName>VAMP-A</shortName>
        <shortName>VAMP-associated protein A</shortName>
        <shortName>VAP-A</shortName>
    </recommendedName>
    <alternativeName>
        <fullName evidence="24">33 kDa VAMP-associated protein</fullName>
        <shortName evidence="21 23">VAP-33</shortName>
    </alternativeName>
</protein>
<accession>Q9P0L0</accession>
<accession>A6NDZ0</accession>
<accession>D3DUI3</accession>
<accession>O75453</accession>
<accession>Q5U0E7</accession>
<accession>Q9UBZ2</accession>
<reference key="1">
    <citation type="journal article" date="1999" name="J. Cell Sci.">
        <title>VAP-33 localizes to both an intracellular vesicle population and with occludin at the tight junction.</title>
        <authorList>
            <person name="Lapierre L.A."/>
            <person name="Tuma P.L."/>
            <person name="Navarre J."/>
            <person name="Goldenring J.R."/>
            <person name="Anderson J.M."/>
        </authorList>
    </citation>
    <scope>NUCLEOTIDE SEQUENCE [MRNA] (ISOFORM 1)</scope>
    <scope>SUBCELLULAR LOCATION</scope>
    <scope>INTERACTION WITH OCLN</scope>
    <source>
        <tissue>Liver</tissue>
    </source>
</reference>
<reference key="2">
    <citation type="submission" date="1999-05" db="EMBL/GenBank/DDBJ databases">
        <title>Cloning and isolating human 33kDa Vamp-associated protein cDNA.</title>
        <authorList>
            <person name="Zhou H.J."/>
            <person name="Huang X.W."/>
            <person name="Zhou Y."/>
            <person name="Hu S.L."/>
            <person name="Yuan J.G."/>
            <person name="Qiang B.Q."/>
        </authorList>
    </citation>
    <scope>NUCLEOTIDE SEQUENCE [MRNA] (ISOFORM 1)</scope>
</reference>
<reference key="3">
    <citation type="journal article" date="2005" name="Nature">
        <title>DNA sequence and analysis of human chromosome 18.</title>
        <authorList>
            <person name="Nusbaum C."/>
            <person name="Zody M.C."/>
            <person name="Borowsky M.L."/>
            <person name="Kamal M."/>
            <person name="Kodira C.D."/>
            <person name="Taylor T.D."/>
            <person name="Whittaker C.A."/>
            <person name="Chang J.L."/>
            <person name="Cuomo C.A."/>
            <person name="Dewar K."/>
            <person name="FitzGerald M.G."/>
            <person name="Yang X."/>
            <person name="Abouelleil A."/>
            <person name="Allen N.R."/>
            <person name="Anderson S."/>
            <person name="Bloom T."/>
            <person name="Bugalter B."/>
            <person name="Butler J."/>
            <person name="Cook A."/>
            <person name="DeCaprio D."/>
            <person name="Engels R."/>
            <person name="Garber M."/>
            <person name="Gnirke A."/>
            <person name="Hafez N."/>
            <person name="Hall J.L."/>
            <person name="Norman C.H."/>
            <person name="Itoh T."/>
            <person name="Jaffe D.B."/>
            <person name="Kuroki Y."/>
            <person name="Lehoczky J."/>
            <person name="Lui A."/>
            <person name="Macdonald P."/>
            <person name="Mauceli E."/>
            <person name="Mikkelsen T.S."/>
            <person name="Naylor J.W."/>
            <person name="Nicol R."/>
            <person name="Nguyen C."/>
            <person name="Noguchi H."/>
            <person name="O'Leary S.B."/>
            <person name="Piqani B."/>
            <person name="Smith C.L."/>
            <person name="Talamas J.A."/>
            <person name="Topham K."/>
            <person name="Totoki Y."/>
            <person name="Toyoda A."/>
            <person name="Wain H.M."/>
            <person name="Young S.K."/>
            <person name="Zeng Q."/>
            <person name="Zimmer A.R."/>
            <person name="Fujiyama A."/>
            <person name="Hattori M."/>
            <person name="Birren B.W."/>
            <person name="Sakaki Y."/>
            <person name="Lander E.S."/>
        </authorList>
    </citation>
    <scope>NUCLEOTIDE SEQUENCE [LARGE SCALE GENOMIC DNA]</scope>
</reference>
<reference key="4">
    <citation type="submission" date="2005-09" db="EMBL/GenBank/DDBJ databases">
        <authorList>
            <person name="Mural R.J."/>
            <person name="Istrail S."/>
            <person name="Sutton G.G."/>
            <person name="Florea L."/>
            <person name="Halpern A.L."/>
            <person name="Mobarry C.M."/>
            <person name="Lippert R."/>
            <person name="Walenz B."/>
            <person name="Shatkay H."/>
            <person name="Dew I."/>
            <person name="Miller J.R."/>
            <person name="Flanigan M.J."/>
            <person name="Edwards N.J."/>
            <person name="Bolanos R."/>
            <person name="Fasulo D."/>
            <person name="Halldorsson B.V."/>
            <person name="Hannenhalli S."/>
            <person name="Turner R."/>
            <person name="Yooseph S."/>
            <person name="Lu F."/>
            <person name="Nusskern D.R."/>
            <person name="Shue B.C."/>
            <person name="Zheng X.H."/>
            <person name="Zhong F."/>
            <person name="Delcher A.L."/>
            <person name="Huson D.H."/>
            <person name="Kravitz S.A."/>
            <person name="Mouchard L."/>
            <person name="Reinert K."/>
            <person name="Remington K.A."/>
            <person name="Clark A.G."/>
            <person name="Waterman M.S."/>
            <person name="Eichler E.E."/>
            <person name="Adams M.D."/>
            <person name="Hunkapiller M.W."/>
            <person name="Myers E.W."/>
            <person name="Venter J.C."/>
        </authorList>
    </citation>
    <scope>NUCLEOTIDE SEQUENCE [LARGE SCALE GENOMIC DNA]</scope>
</reference>
<reference key="5">
    <citation type="journal article" date="2004" name="Genome Res.">
        <title>The status, quality, and expansion of the NIH full-length cDNA project: the Mammalian Gene Collection (MGC).</title>
        <authorList>
            <consortium name="The MGC Project Team"/>
        </authorList>
    </citation>
    <scope>NUCLEOTIDE SEQUENCE [LARGE SCALE MRNA] (ISOFORM 1)</scope>
    <scope>NUCLEOTIDE SEQUENCE [LARGE SCALE MRNA] OF 1-199 (ISOFORM 2)</scope>
    <source>
        <tissue>Lung</tissue>
    </source>
</reference>
<reference key="6">
    <citation type="journal article" date="1998" name="Biochem. J.">
        <title>Identification of a human homologue of the vesicle-associated membrane protein (VAMP)-associated protein of 33 kDa (VAP-33): a broadly expressed protein that binds to VAMP.</title>
        <authorList>
            <person name="Weir M.L."/>
            <person name="Klip A."/>
            <person name="Trimble W.S."/>
        </authorList>
    </citation>
    <scope>NUCLEOTIDE SEQUENCE [MRNA] OF 8-249 (ISOFORM 1)</scope>
    <scope>INTERACTION WITH VAMP1 AND VAMP2</scope>
    <source>
        <tissue>Pancreatic islet</tissue>
    </source>
</reference>
<reference key="7">
    <citation type="journal article" date="1999" name="Biochem. Biophys. Res. Commun.">
        <title>Molecular cloning and characterization of mammalian homologues of vesicle-associated membrane protein-associated (VAMP-associated) proteins.</title>
        <authorList>
            <person name="Nishimura Y."/>
            <person name="Hayashi M."/>
            <person name="Inada H."/>
            <person name="Tanaka T."/>
        </authorList>
    </citation>
    <scope>NUCLEOTIDE SEQUENCE [MRNA] OF 8-249 (ISOFORM 1)</scope>
    <source>
        <tissue>B-cell</tissue>
    </source>
</reference>
<reference key="8">
    <citation type="submission" date="2004-10" db="EMBL/GenBank/DDBJ databases">
        <title>Cloning of human full-length CDSs in BD Creator(TM) system donor vector.</title>
        <authorList>
            <person name="Kalnine N."/>
            <person name="Chen X."/>
            <person name="Rolfs A."/>
            <person name="Halleck A."/>
            <person name="Hines L."/>
            <person name="Eisenstein S."/>
            <person name="Koundinya M."/>
            <person name="Raphael J."/>
            <person name="Moreira D."/>
            <person name="Kelley T."/>
            <person name="LaBaer J."/>
            <person name="Lin Y."/>
            <person name="Phelan M."/>
            <person name="Farmer A."/>
        </authorList>
    </citation>
    <scope>NUCLEOTIDE SEQUENCE [LARGE SCALE MRNA] OF 8-249 (ISOFORM 1)</scope>
</reference>
<reference key="9">
    <citation type="journal article" date="2001" name="Biochem. Biophys. Res. Commun.">
        <title>VAP-A binds promiscuously to both v- and tSNAREs.</title>
        <authorList>
            <person name="Weir M.L."/>
            <person name="Xie H."/>
            <person name="Klip A."/>
            <person name="Trimble W.S."/>
        </authorList>
    </citation>
    <scope>FUNCTION</scope>
    <scope>INTERACTION WITH VAPB; VAMP1; VAMP2; STX1A; BET1 AND SEC22C</scope>
</reference>
<reference key="10">
    <citation type="journal article" date="2005" name="Exp. Cell Res.">
        <title>Targeting of OSBP-related protein 3 (ORP3) to endoplasmic reticulum and plasma membrane is controlled by multiple determinants.</title>
        <authorList>
            <person name="Lehto M."/>
            <person name="Hynynen R."/>
            <person name="Karjalainen K."/>
            <person name="Kuismanen E."/>
            <person name="Hyvaerinen K."/>
            <person name="Olkkonen V.M."/>
        </authorList>
    </citation>
    <scope>FUNCTION</scope>
    <scope>INTERACTION WITH OSBPL3</scope>
    <scope>SUBCELLULAR LOCATION</scope>
</reference>
<reference key="11">
    <citation type="journal article" date="2006" name="J. Biol. Chem.">
        <title>Efficient trafficking of ceramide from the endoplasmic reticulum to the Golgi apparatus requires a VAMP-associated protein-interacting FFAT motif of CERT.</title>
        <authorList>
            <person name="Kawano M."/>
            <person name="Kumagai K."/>
            <person name="Nishijima M."/>
            <person name="Hanada K."/>
        </authorList>
    </citation>
    <scope>INTERACTION WITH CERT1</scope>
</reference>
<reference key="12">
    <citation type="journal article" date="2009" name="J. Biol. Chem.">
        <title>Promotion of neurite extension by protrudin requires its interaction with vesicle-associated membrane protein-associated protein.</title>
        <authorList>
            <person name="Saita S."/>
            <person name="Shirane M."/>
            <person name="Natume T."/>
            <person name="Iemura S."/>
            <person name="Nakayama K.I."/>
        </authorList>
    </citation>
    <scope>FUNCTION</scope>
    <scope>INTERACTION WITH ZFYVE27</scope>
    <scope>MUTAGENESIS OF LYS-94 AND MET-96</scope>
    <scope>SUBCELLULAR LOCATION</scope>
</reference>
<reference key="13">
    <citation type="journal article" date="2009" name="Science">
        <title>Lysine acetylation targets protein complexes and co-regulates major cellular functions.</title>
        <authorList>
            <person name="Choudhary C."/>
            <person name="Kumar C."/>
            <person name="Gnad F."/>
            <person name="Nielsen M.L."/>
            <person name="Rehman M."/>
            <person name="Walther T.C."/>
            <person name="Olsen J.V."/>
            <person name="Mann M."/>
        </authorList>
    </citation>
    <scope>ACETYLATION [LARGE SCALE ANALYSIS] AT LYS-125</scope>
    <scope>IDENTIFICATION BY MASS SPECTROMETRY [LARGE SCALE ANALYSIS]</scope>
</reference>
<reference key="14">
    <citation type="journal article" date="2011" name="BMC Syst. Biol.">
        <title>Initial characterization of the human central proteome.</title>
        <authorList>
            <person name="Burkard T.R."/>
            <person name="Planyavsky M."/>
            <person name="Kaupe I."/>
            <person name="Breitwieser F.P."/>
            <person name="Buerckstuemmer T."/>
            <person name="Bennett K.L."/>
            <person name="Superti-Furga G."/>
            <person name="Colinge J."/>
        </authorList>
    </citation>
    <scope>IDENTIFICATION BY MASS SPECTROMETRY [LARGE SCALE ANALYSIS]</scope>
</reference>
<reference key="15">
    <citation type="journal article" date="2011" name="Mol. Biol. Cell">
        <title>Protrudin serves as an adaptor molecule that connects KIF5 and its cargoes in vesicular transport during process formation.</title>
        <authorList>
            <person name="Matsuzaki F."/>
            <person name="Shirane M."/>
            <person name="Matsumoto M."/>
            <person name="Nakayama K.I."/>
        </authorList>
    </citation>
    <scope>INTERACTION WITH ZFYVE27 AND KIF5A</scope>
</reference>
<reference key="16">
    <citation type="journal article" date="2012" name="J. Gen. Virol.">
        <title>Viperin inhibits hepatitis C virus replication by interfering with binding of NS5A to host protein hVAP-33.</title>
        <authorList>
            <person name="Wang S."/>
            <person name="Wu X."/>
            <person name="Pan T."/>
            <person name="Song W."/>
            <person name="Wang Y."/>
            <person name="Zhang F."/>
            <person name="Yuan Z."/>
        </authorList>
    </citation>
    <scope>INTERACTION WITH RSAD2</scope>
    <scope>INTERACTION WITH HCV PROTEIN NS5A AND NS5B (MICROBIAL INFECTION)</scope>
</reference>
<reference key="17">
    <citation type="journal article" date="2013" name="Cell Host Microbe">
        <title>The antiviral effector IFITM3 disrupts intracellular cholesterol homeostasis to block viral entry.</title>
        <authorList>
            <person name="Amini-Bavil-Olyaee S."/>
            <person name="Choi Y.J."/>
            <person name="Lee J.H."/>
            <person name="Shi M."/>
            <person name="Huang I.C."/>
            <person name="Farzan M."/>
            <person name="Jung J.U."/>
        </authorList>
    </citation>
    <scope>INTERACTION WITH IFITM3</scope>
</reference>
<reference key="18">
    <citation type="journal article" date="2013" name="J. Cell Sci.">
        <title>STARD3 or STARD3NL and VAP form a novel molecular tether between late endosomes and the ER.</title>
        <authorList>
            <person name="Alpy F."/>
            <person name="Rousseau A."/>
            <person name="Schwab Y."/>
            <person name="Legueux F."/>
            <person name="Stoll I."/>
            <person name="Wendling C."/>
            <person name="Spiegelhalter C."/>
            <person name="Kessler P."/>
            <person name="Mathelin C."/>
            <person name="Rio M.C."/>
            <person name="Levine T.P."/>
            <person name="Tomasetto C."/>
        </authorList>
    </citation>
    <scope>INTERACTION WITH STARD3 AND STARD3NL</scope>
</reference>
<reference key="19">
    <citation type="journal article" date="2013" name="J. Proteome Res.">
        <title>Toward a comprehensive characterization of a human cancer cell phosphoproteome.</title>
        <authorList>
            <person name="Zhou H."/>
            <person name="Di Palma S."/>
            <person name="Preisinger C."/>
            <person name="Peng M."/>
            <person name="Polat A.N."/>
            <person name="Heck A.J."/>
            <person name="Mohammed S."/>
        </authorList>
    </citation>
    <scope>PHOSPHORYLATION [LARGE SCALE ANALYSIS] AT SER-166; THR-170; SER-214; SER-216 AND SER-219</scope>
    <scope>IDENTIFICATION BY MASS SPECTROMETRY [LARGE SCALE ANALYSIS]</scope>
    <source>
        <tissue>Cervix carcinoma</tissue>
        <tissue>Erythroleukemia</tissue>
    </source>
</reference>
<reference key="20">
    <citation type="journal article" date="2014" name="J. Proteomics">
        <title>An enzyme assisted RP-RPLC approach for in-depth analysis of human liver phosphoproteome.</title>
        <authorList>
            <person name="Bian Y."/>
            <person name="Song C."/>
            <person name="Cheng K."/>
            <person name="Dong M."/>
            <person name="Wang F."/>
            <person name="Huang J."/>
            <person name="Sun D."/>
            <person name="Wang L."/>
            <person name="Ye M."/>
            <person name="Zou H."/>
        </authorList>
    </citation>
    <scope>PHOSPHORYLATION [LARGE SCALE ANALYSIS] AT SER-214</scope>
    <scope>IDENTIFICATION BY MASS SPECTROMETRY [LARGE SCALE ANALYSIS]</scope>
    <source>
        <tissue>Liver</tissue>
    </source>
</reference>
<reference key="21">
    <citation type="journal article" date="2015" name="Exp. Cell Res.">
        <title>OSBP-related protein 3 (ORP3) coupling with VAMP-associated protein A regulates R-Ras activity.</title>
        <authorList>
            <person name="Weber-Boyvat M."/>
            <person name="Kentala H."/>
            <person name="Lilja J."/>
            <person name="Vihervaara T."/>
            <person name="Hanninen R."/>
            <person name="Zhou Y."/>
            <person name="Peranen J."/>
            <person name="Nyman T.A."/>
            <person name="Ivaska J."/>
            <person name="Olkkonen V.M."/>
        </authorList>
    </citation>
    <scope>FUNCTION</scope>
    <scope>INTERACTION WITH OSBPL3</scope>
    <scope>SUBCELLULAR LOCATION</scope>
</reference>
<reference key="22">
    <citation type="journal article" date="2015" name="Proteomics">
        <title>N-terminome analysis of the human mitochondrial proteome.</title>
        <authorList>
            <person name="Vaca Jacome A.S."/>
            <person name="Rabilloud T."/>
            <person name="Schaeffer-Reiss C."/>
            <person name="Rompais M."/>
            <person name="Ayoub D."/>
            <person name="Lane L."/>
            <person name="Bairoch A."/>
            <person name="Van Dorsselaer A."/>
            <person name="Carapito C."/>
        </authorList>
    </citation>
    <scope>ACETYLATION [LARGE SCALE ANALYSIS] AT ALA-2</scope>
    <scope>CLEAVAGE OF INITIATOR METHIONINE [LARGE SCALE ANALYSIS]</scope>
    <scope>IDENTIFICATION BY MASS SPECTROMETRY [LARGE SCALE ANALYSIS]</scope>
</reference>
<reference key="23">
    <citation type="journal article" date="2018" name="EMBO Rep.">
        <title>Identification of MOSPD2, a novel scaffold for endoplasmic reticulum membrane contact sites.</title>
        <authorList>
            <person name="Di Mattia T."/>
            <person name="Wilhelm L.P."/>
            <person name="Ikhlef S."/>
            <person name="Wendling C."/>
            <person name="Spehner D."/>
            <person name="Nomine Y."/>
            <person name="Giordano F."/>
            <person name="Mathelin C."/>
            <person name="Drin G."/>
            <person name="Tomasetto C."/>
            <person name="Alpy F."/>
        </authorList>
    </citation>
    <scope>IDENTIFICATION BY MASS SPECTROMETRY</scope>
    <scope>MUTAGENESIS OF LYS-94 AND MET-96</scope>
</reference>
<reference key="24">
    <citation type="journal article" date="2019" name="Elife">
        <title>Human VPS13A is associated with multiple organelles and influences mitochondrial morphology and lipid droplet motility.</title>
        <authorList>
            <person name="Yeshaw W.M."/>
            <person name="van der Zwaag M."/>
            <person name="Pinto F."/>
            <person name="Lahaye L.L."/>
            <person name="Faber A.I."/>
            <person name="Gomez-Sanchez R."/>
            <person name="Dolga A.M."/>
            <person name="Poland C."/>
            <person name="Monaco A.P."/>
            <person name="van Ijzendoorn S.C."/>
            <person name="Grzeschik N.A."/>
            <person name="Velayos-Baeza A."/>
            <person name="Sibon O.C."/>
        </authorList>
    </citation>
    <scope>SUBCELLULAR LOCATION</scope>
    <scope>INTERACTION WITH VPS13A</scope>
</reference>
<reference key="25">
    <citation type="journal article" date="2019" name="J. Cell Biol.">
        <title>The activity of Sac1 across ER-TGN contact sites requires the four-phosphate-adaptor-protein-1.</title>
        <authorList>
            <person name="Venditti R."/>
            <person name="Masone M.C."/>
            <person name="Rega L.R."/>
            <person name="Di Tullio G."/>
            <person name="Santoro M."/>
            <person name="Polishchuk E."/>
            <person name="Serrano I.C."/>
            <person name="Olkkonen V.M."/>
            <person name="Harada A."/>
            <person name="Medina D.L."/>
            <person name="La Montagna R."/>
            <person name="De Matteis M.A."/>
        </authorList>
    </citation>
    <scope>INTERACTION WITH PLEKHA3 AND SACM1L</scope>
</reference>
<reference key="26">
    <citation type="journal article" date="2020" name="J. Cell Biol.">
        <title>GRAF2, WDR44, and MICAL1 mediate Rab8/10/11-dependent export of E-cadherin, MMP14, and CFTR DeltaF508.</title>
        <authorList>
            <person name="Lucken-Ardjomande Haesler S."/>
            <person name="Vallis Y."/>
            <person name="Pasche M."/>
            <person name="McMahon H.T."/>
        </authorList>
    </citation>
    <scope>FUNCTION</scope>
    <scope>SUBCELLULAR LOCATION</scope>
    <scope>INTERACTION WITH WDR44</scope>
    <scope>MUTAGENESIS OF 1-MET--VAL-51; LYS-94 AND MET-96</scope>
    <scope>DOMAIN</scope>
</reference>
<reference evidence="27" key="27">
    <citation type="journal article" date="2010" name="J. Biol. Chem.">
        <title>Electrostatic interaction between oxysterol-binding protein and VAMP-associated protein A revealed by NMR and mutagenesis studies.</title>
        <authorList>
            <person name="Furuita K."/>
            <person name="Jee J."/>
            <person name="Fukada H."/>
            <person name="Mishima M."/>
            <person name="Kojima C."/>
        </authorList>
    </citation>
    <scope>STRUCTURE BY NMR OF 11-135</scope>
    <scope>INTERACTION WITH OSBP</scope>
</reference>
<reference evidence="28" key="28">
    <citation type="journal article" date="2020" name="EMBO J.">
        <title>FFAT motif phosphorylation controls formation and lipid transfer function of inter-organelle contacts.</title>
        <authorList>
            <person name="Di Mattia T."/>
            <person name="Martinet A."/>
            <person name="Ikhlef S."/>
            <person name="McEwen A.G."/>
            <person name="Nomine Y."/>
            <person name="Wendling C."/>
            <person name="Poussin-Courmontagne P."/>
            <person name="Voilquin L."/>
            <person name="Eberling P."/>
            <person name="Ruffenach F."/>
            <person name="Cavarelli J."/>
            <person name="Slee J."/>
            <person name="Levine T.P."/>
            <person name="Drin G."/>
            <person name="Tomasetto C."/>
            <person name="Alpy F."/>
        </authorList>
    </citation>
    <scope>X-RAY CRYSTALLOGRAPHY (1.85 ANGSTROMS) OF 9-134 IN COMPLEX WITH THE PHOSPHO-FFAT MOTIF OF STARD3</scope>
    <scope>FUNCTION</scope>
    <scope>SUBUNIT</scope>
    <scope>INTERACTION WITH STARD3; RB1CC1; MIGA2; RMDN3; KCNB1; KCNB2 AND OSBPL1A</scope>
    <scope>MUTAGENESIS OF LYS-50 AND SER-209</scope>
    <scope>SITE</scope>
    <scope>SUBCELLULAR LOCATION</scope>
    <scope>DISULFIDE BOND</scope>
</reference>